<proteinExistence type="inferred from homology"/>
<name>IF2B_THEVO</name>
<evidence type="ECO:0000250" key="1"/>
<evidence type="ECO:0000305" key="2"/>
<organism>
    <name type="scientific">Thermoplasma volcanium (strain ATCC 51530 / DSM 4299 / JCM 9571 / NBRC 15438 / GSS1)</name>
    <dbReference type="NCBI Taxonomy" id="273116"/>
    <lineage>
        <taxon>Archaea</taxon>
        <taxon>Methanobacteriati</taxon>
        <taxon>Thermoplasmatota</taxon>
        <taxon>Thermoplasmata</taxon>
        <taxon>Thermoplasmatales</taxon>
        <taxon>Thermoplasmataceae</taxon>
        <taxon>Thermoplasma</taxon>
    </lineage>
</organism>
<sequence length="208" mass="23524">MTDSYDKLLEKAKDVLSSSTKNIDRLKIPEPEIIREGKATIIRNFQDIIDIINRDPDQVIKFLTRELGTNIVQNGRRLIINKKVTLEELQEKMNEYINTYVRCYECGSLDTEIQKSGRVSLLVCKACGAQHPIHTVKEFKEEEGIEEGKEYTVEISEVGSSGEGRASFRGFTIFVPGTKKGETVKVKIKKIKNDVAIAEVVSRTSDKK</sequence>
<keyword id="KW-0396">Initiation factor</keyword>
<keyword id="KW-0648">Protein biosynthesis</keyword>
<protein>
    <recommendedName>
        <fullName>Translation initiation factor 2 subunit beta</fullName>
    </recommendedName>
    <alternativeName>
        <fullName>aIF2-beta</fullName>
    </alternativeName>
    <alternativeName>
        <fullName>eIF-2-beta</fullName>
    </alternativeName>
</protein>
<feature type="chain" id="PRO_0000137437" description="Translation initiation factor 2 subunit beta">
    <location>
        <begin position="1"/>
        <end position="208"/>
    </location>
</feature>
<feature type="domain" description="TRAM">
    <location>
        <begin position="144"/>
        <end position="202"/>
    </location>
</feature>
<accession>Q97B05</accession>
<comment type="function">
    <text evidence="1">eIF-2 functions in the early steps of protein synthesis by forming a ternary complex with GTP and initiator tRNA.</text>
</comment>
<comment type="subunit">
    <text evidence="1">Heterotrimer composed of an alpha, a beta and a gamma chain.</text>
</comment>
<comment type="similarity">
    <text evidence="2">Belongs to the eIF-2-beta/eIF-5 family.</text>
</comment>
<comment type="sequence caution" evidence="2">
    <conflict type="erroneous initiation">
        <sequence resource="EMBL-CDS" id="BAB59796"/>
    </conflict>
</comment>
<reference key="1">
    <citation type="journal article" date="2000" name="Proc. Natl. Acad. Sci. U.S.A.">
        <title>Archaeal adaptation to higher temperatures revealed by genomic sequence of Thermoplasma volcanium.</title>
        <authorList>
            <person name="Kawashima T."/>
            <person name="Amano N."/>
            <person name="Koike H."/>
            <person name="Makino S."/>
            <person name="Higuchi S."/>
            <person name="Kawashima-Ohya Y."/>
            <person name="Watanabe K."/>
            <person name="Yamazaki M."/>
            <person name="Kanehori K."/>
            <person name="Kawamoto T."/>
            <person name="Nunoshiba T."/>
            <person name="Yamamoto Y."/>
            <person name="Aramaki H."/>
            <person name="Makino K."/>
            <person name="Suzuki M."/>
        </authorList>
    </citation>
    <scope>NUCLEOTIDE SEQUENCE [LARGE SCALE GENOMIC DNA]</scope>
    <source>
        <strain>ATCC 51530 / DSM 4299 / JCM 9571 / NBRC 15438 / GSS1</strain>
    </source>
</reference>
<dbReference type="EMBL" id="BA000011">
    <property type="protein sequence ID" value="BAB59796.1"/>
    <property type="status" value="ALT_INIT"/>
    <property type="molecule type" value="Genomic_DNA"/>
</dbReference>
<dbReference type="RefSeq" id="WP_010916913.1">
    <property type="nucleotide sequence ID" value="NC_002689.2"/>
</dbReference>
<dbReference type="SMR" id="Q97B05"/>
<dbReference type="STRING" id="273116.gene:9381442"/>
<dbReference type="PaxDb" id="273116-14324870"/>
<dbReference type="GeneID" id="1441761"/>
<dbReference type="KEGG" id="tvo:TVG0649580"/>
<dbReference type="eggNOG" id="arCOG01640">
    <property type="taxonomic scope" value="Archaea"/>
</dbReference>
<dbReference type="HOGENOM" id="CLU_026663_3_0_2"/>
<dbReference type="OrthoDB" id="38099at2157"/>
<dbReference type="PhylomeDB" id="Q97B05"/>
<dbReference type="Proteomes" id="UP000001017">
    <property type="component" value="Chromosome"/>
</dbReference>
<dbReference type="GO" id="GO:0003743">
    <property type="term" value="F:translation initiation factor activity"/>
    <property type="evidence" value="ECO:0007669"/>
    <property type="project" value="UniProtKB-UniRule"/>
</dbReference>
<dbReference type="Gene3D" id="3.30.30.170">
    <property type="match status" value="1"/>
</dbReference>
<dbReference type="Gene3D" id="2.40.50.140">
    <property type="entry name" value="Nucleic acid-binding proteins"/>
    <property type="match status" value="1"/>
</dbReference>
<dbReference type="HAMAP" id="MF_00232">
    <property type="entry name" value="eIF_2_beta"/>
    <property type="match status" value="1"/>
</dbReference>
<dbReference type="InterPro" id="IPR045196">
    <property type="entry name" value="IF2/IF5"/>
</dbReference>
<dbReference type="InterPro" id="IPR012340">
    <property type="entry name" value="NA-bd_OB-fold"/>
</dbReference>
<dbReference type="InterPro" id="IPR004458">
    <property type="entry name" value="TIF2_bsu_arc"/>
</dbReference>
<dbReference type="InterPro" id="IPR002792">
    <property type="entry name" value="TRAM_dom"/>
</dbReference>
<dbReference type="InterPro" id="IPR002735">
    <property type="entry name" value="Transl_init_fac_IF2/IF5_dom"/>
</dbReference>
<dbReference type="InterPro" id="IPR016189">
    <property type="entry name" value="Transl_init_fac_IF2/IF5_N"/>
</dbReference>
<dbReference type="InterPro" id="IPR016190">
    <property type="entry name" value="Transl_init_fac_IF2/IF5_Zn-bd"/>
</dbReference>
<dbReference type="NCBIfam" id="NF003067">
    <property type="entry name" value="PRK03988.1"/>
    <property type="match status" value="1"/>
</dbReference>
<dbReference type="NCBIfam" id="NF008993">
    <property type="entry name" value="PRK12336.1"/>
    <property type="match status" value="1"/>
</dbReference>
<dbReference type="PANTHER" id="PTHR23001">
    <property type="entry name" value="EUKARYOTIC TRANSLATION INITIATION FACTOR"/>
    <property type="match status" value="1"/>
</dbReference>
<dbReference type="PANTHER" id="PTHR23001:SF3">
    <property type="entry name" value="EUKARYOTIC TRANSLATION INITIATION FACTOR 2 SUBUNIT 2"/>
    <property type="match status" value="1"/>
</dbReference>
<dbReference type="Pfam" id="PF01873">
    <property type="entry name" value="eIF-5_eIF-2B"/>
    <property type="match status" value="1"/>
</dbReference>
<dbReference type="Pfam" id="PF01938">
    <property type="entry name" value="TRAM"/>
    <property type="match status" value="1"/>
</dbReference>
<dbReference type="SMART" id="SM00653">
    <property type="entry name" value="eIF2B_5"/>
    <property type="match status" value="1"/>
</dbReference>
<dbReference type="SUPFAM" id="SSF50249">
    <property type="entry name" value="Nucleic acid-binding proteins"/>
    <property type="match status" value="1"/>
</dbReference>
<dbReference type="SUPFAM" id="SSF100966">
    <property type="entry name" value="Translation initiation factor 2 beta, aIF2beta, N-terminal domain"/>
    <property type="match status" value="1"/>
</dbReference>
<dbReference type="SUPFAM" id="SSF75689">
    <property type="entry name" value="Zinc-binding domain of translation initiation factor 2 beta"/>
    <property type="match status" value="1"/>
</dbReference>
<dbReference type="PROSITE" id="PS50926">
    <property type="entry name" value="TRAM"/>
    <property type="match status" value="1"/>
</dbReference>
<gene>
    <name type="primary">eif2b</name>
    <name type="ordered locus">TV0654</name>
    <name type="ORF">TVG0649580</name>
</gene>